<protein>
    <recommendedName>
        <fullName evidence="1">HTH-type transcriptional activator RhaR</fullName>
    </recommendedName>
    <alternativeName>
        <fullName evidence="1">L-rhamnose operon transcriptional activator RhaR</fullName>
    </alternativeName>
</protein>
<sequence>MAHQLKLLKDDFFASDQQAVAVADRYPQDVFAEHTHDFCELVIVWRGNGLHVLNDRPYRITRGDLFYIHADDKHSYASVNDLVLQNIIYCPERLKLNLDWQGAIPGFSASAGQPHWRLGSVGMAQARQVIGQLEHESSQHVSFANEMAELLFGQLVMLLNRHRYTSDSLPPTSSETLLDKLITRLAASLKSPFALDKFCDEASCSERVLRQQFRQQTGMTINQYLRQVRVCHAQYLLQHSRLLISDISTECGFEDSNYFSVVFTRETGMTPSQWRHLNSQKD</sequence>
<comment type="function">
    <text evidence="1">Activates expression of the rhaSR operon in response to L-rhamnose.</text>
</comment>
<comment type="subunit">
    <text evidence="1">Binds DNA as a dimer.</text>
</comment>
<comment type="subcellular location">
    <subcellularLocation>
        <location evidence="1">Cytoplasm</location>
    </subcellularLocation>
</comment>
<comment type="sequence caution" evidence="2">
    <conflict type="erroneous initiation">
        <sequence resource="EMBL-CDS" id="ABV18617"/>
    </conflict>
</comment>
<keyword id="KW-0010">Activator</keyword>
<keyword id="KW-0963">Cytoplasm</keyword>
<keyword id="KW-0238">DNA-binding</keyword>
<keyword id="KW-1185">Reference proteome</keyword>
<keyword id="KW-0677">Repeat</keyword>
<keyword id="KW-0684">Rhamnose metabolism</keyword>
<keyword id="KW-0804">Transcription</keyword>
<keyword id="KW-0805">Transcription regulation</keyword>
<dbReference type="EMBL" id="CP000800">
    <property type="protein sequence ID" value="ABV18617.1"/>
    <property type="status" value="ALT_INIT"/>
    <property type="molecule type" value="Genomic_DNA"/>
</dbReference>
<dbReference type="RefSeq" id="WP_001298410.1">
    <property type="nucleotide sequence ID" value="NC_009801.1"/>
</dbReference>
<dbReference type="SMR" id="A7ZUB8"/>
<dbReference type="GeneID" id="93778032"/>
<dbReference type="KEGG" id="ecw:EcE24377A_4439"/>
<dbReference type="HOGENOM" id="CLU_000445_88_5_6"/>
<dbReference type="Proteomes" id="UP000001122">
    <property type="component" value="Chromosome"/>
</dbReference>
<dbReference type="GO" id="GO:0005737">
    <property type="term" value="C:cytoplasm"/>
    <property type="evidence" value="ECO:0007669"/>
    <property type="project" value="UniProtKB-SubCell"/>
</dbReference>
<dbReference type="GO" id="GO:0003700">
    <property type="term" value="F:DNA-binding transcription factor activity"/>
    <property type="evidence" value="ECO:0007669"/>
    <property type="project" value="UniProtKB-UniRule"/>
</dbReference>
<dbReference type="GO" id="GO:0043565">
    <property type="term" value="F:sequence-specific DNA binding"/>
    <property type="evidence" value="ECO:0007669"/>
    <property type="project" value="InterPro"/>
</dbReference>
<dbReference type="GO" id="GO:0045893">
    <property type="term" value="P:positive regulation of DNA-templated transcription"/>
    <property type="evidence" value="ECO:0007669"/>
    <property type="project" value="UniProtKB-UniRule"/>
</dbReference>
<dbReference type="GO" id="GO:0019299">
    <property type="term" value="P:rhamnose metabolic process"/>
    <property type="evidence" value="ECO:0007669"/>
    <property type="project" value="UniProtKB-UniRule"/>
</dbReference>
<dbReference type="CDD" id="cd06977">
    <property type="entry name" value="cupin_RhaR_RhaS-like_N"/>
    <property type="match status" value="1"/>
</dbReference>
<dbReference type="Gene3D" id="1.10.10.60">
    <property type="entry name" value="Homeodomain-like"/>
    <property type="match status" value="2"/>
</dbReference>
<dbReference type="Gene3D" id="2.60.120.10">
    <property type="entry name" value="Jelly Rolls"/>
    <property type="match status" value="1"/>
</dbReference>
<dbReference type="HAMAP" id="MF_01533">
    <property type="entry name" value="HTH_type_RhaR"/>
    <property type="match status" value="1"/>
</dbReference>
<dbReference type="InterPro" id="IPR003313">
    <property type="entry name" value="AraC-bd"/>
</dbReference>
<dbReference type="InterPro" id="IPR009057">
    <property type="entry name" value="Homeodomain-like_sf"/>
</dbReference>
<dbReference type="InterPro" id="IPR018060">
    <property type="entry name" value="HTH_AraC"/>
</dbReference>
<dbReference type="InterPro" id="IPR018062">
    <property type="entry name" value="HTH_AraC-typ_CS"/>
</dbReference>
<dbReference type="InterPro" id="IPR047220">
    <property type="entry name" value="RhaR_RhaS-like_N"/>
</dbReference>
<dbReference type="InterPro" id="IPR014710">
    <property type="entry name" value="RmlC-like_jellyroll"/>
</dbReference>
<dbReference type="InterPro" id="IPR011051">
    <property type="entry name" value="RmlC_Cupin_sf"/>
</dbReference>
<dbReference type="InterPro" id="IPR023699">
    <property type="entry name" value="Tscrpt_act_RhaR"/>
</dbReference>
<dbReference type="InterPro" id="IPR020449">
    <property type="entry name" value="Tscrpt_reg_AraC-type_HTH"/>
</dbReference>
<dbReference type="NCBIfam" id="NF010025">
    <property type="entry name" value="PRK13500.1"/>
    <property type="match status" value="1"/>
</dbReference>
<dbReference type="NCBIfam" id="NF010026">
    <property type="entry name" value="PRK13501.1"/>
    <property type="match status" value="1"/>
</dbReference>
<dbReference type="NCBIfam" id="NF010027">
    <property type="entry name" value="PRK13502.1"/>
    <property type="match status" value="1"/>
</dbReference>
<dbReference type="PANTHER" id="PTHR43280">
    <property type="entry name" value="ARAC-FAMILY TRANSCRIPTIONAL REGULATOR"/>
    <property type="match status" value="1"/>
</dbReference>
<dbReference type="PANTHER" id="PTHR43280:SF13">
    <property type="entry name" value="HTH-TYPE TRANSCRIPTIONAL ACTIVATOR RHAR"/>
    <property type="match status" value="1"/>
</dbReference>
<dbReference type="Pfam" id="PF02311">
    <property type="entry name" value="AraC_binding"/>
    <property type="match status" value="1"/>
</dbReference>
<dbReference type="Pfam" id="PF12833">
    <property type="entry name" value="HTH_18"/>
    <property type="match status" value="1"/>
</dbReference>
<dbReference type="PRINTS" id="PR00032">
    <property type="entry name" value="HTHARAC"/>
</dbReference>
<dbReference type="SMART" id="SM00342">
    <property type="entry name" value="HTH_ARAC"/>
    <property type="match status" value="1"/>
</dbReference>
<dbReference type="SUPFAM" id="SSF46689">
    <property type="entry name" value="Homeodomain-like"/>
    <property type="match status" value="2"/>
</dbReference>
<dbReference type="SUPFAM" id="SSF51182">
    <property type="entry name" value="RmlC-like cupins"/>
    <property type="match status" value="1"/>
</dbReference>
<dbReference type="PROSITE" id="PS00041">
    <property type="entry name" value="HTH_ARAC_FAMILY_1"/>
    <property type="match status" value="1"/>
</dbReference>
<dbReference type="PROSITE" id="PS01124">
    <property type="entry name" value="HTH_ARAC_FAMILY_2"/>
    <property type="match status" value="1"/>
</dbReference>
<gene>
    <name evidence="1" type="primary">rhaR</name>
    <name type="ordered locus">EcE24377A_4439</name>
</gene>
<organism>
    <name type="scientific">Escherichia coli O139:H28 (strain E24377A / ETEC)</name>
    <dbReference type="NCBI Taxonomy" id="331111"/>
    <lineage>
        <taxon>Bacteria</taxon>
        <taxon>Pseudomonadati</taxon>
        <taxon>Pseudomonadota</taxon>
        <taxon>Gammaproteobacteria</taxon>
        <taxon>Enterobacterales</taxon>
        <taxon>Enterobacteriaceae</taxon>
        <taxon>Escherichia</taxon>
    </lineage>
</organism>
<accession>A7ZUB8</accession>
<name>RHAR_ECO24</name>
<reference key="1">
    <citation type="journal article" date="2008" name="J. Bacteriol.">
        <title>The pangenome structure of Escherichia coli: comparative genomic analysis of E. coli commensal and pathogenic isolates.</title>
        <authorList>
            <person name="Rasko D.A."/>
            <person name="Rosovitz M.J."/>
            <person name="Myers G.S.A."/>
            <person name="Mongodin E.F."/>
            <person name="Fricke W.F."/>
            <person name="Gajer P."/>
            <person name="Crabtree J."/>
            <person name="Sebaihia M."/>
            <person name="Thomson N.R."/>
            <person name="Chaudhuri R."/>
            <person name="Henderson I.R."/>
            <person name="Sperandio V."/>
            <person name="Ravel J."/>
        </authorList>
    </citation>
    <scope>NUCLEOTIDE SEQUENCE [LARGE SCALE GENOMIC DNA]</scope>
    <source>
        <strain>E24377A / ETEC</strain>
    </source>
</reference>
<proteinExistence type="inferred from homology"/>
<feature type="chain" id="PRO_0000316895" description="HTH-type transcriptional activator RhaR">
    <location>
        <begin position="1"/>
        <end position="282"/>
    </location>
</feature>
<feature type="domain" description="HTH araC/xylS-type" evidence="1">
    <location>
        <begin position="179"/>
        <end position="277"/>
    </location>
</feature>
<feature type="DNA-binding region" description="H-T-H motif" evidence="1">
    <location>
        <begin position="196"/>
        <end position="217"/>
    </location>
</feature>
<feature type="DNA-binding region" description="H-T-H motif" evidence="1">
    <location>
        <begin position="244"/>
        <end position="267"/>
    </location>
</feature>
<feature type="site" description="Interaction with sigma-70" evidence="1">
    <location>
        <position position="246"/>
    </location>
</feature>
<evidence type="ECO:0000255" key="1">
    <source>
        <dbReference type="HAMAP-Rule" id="MF_01533"/>
    </source>
</evidence>
<evidence type="ECO:0000305" key="2"/>